<proteinExistence type="evidence at protein level"/>
<reference key="1">
    <citation type="journal article" date="2005" name="Science">
        <title>The transcriptional landscape of the mammalian genome.</title>
        <authorList>
            <person name="Carninci P."/>
            <person name="Kasukawa T."/>
            <person name="Katayama S."/>
            <person name="Gough J."/>
            <person name="Frith M.C."/>
            <person name="Maeda N."/>
            <person name="Oyama R."/>
            <person name="Ravasi T."/>
            <person name="Lenhard B."/>
            <person name="Wells C."/>
            <person name="Kodzius R."/>
            <person name="Shimokawa K."/>
            <person name="Bajic V.B."/>
            <person name="Brenner S.E."/>
            <person name="Batalov S."/>
            <person name="Forrest A.R."/>
            <person name="Zavolan M."/>
            <person name="Davis M.J."/>
            <person name="Wilming L.G."/>
            <person name="Aidinis V."/>
            <person name="Allen J.E."/>
            <person name="Ambesi-Impiombato A."/>
            <person name="Apweiler R."/>
            <person name="Aturaliya R.N."/>
            <person name="Bailey T.L."/>
            <person name="Bansal M."/>
            <person name="Baxter L."/>
            <person name="Beisel K.W."/>
            <person name="Bersano T."/>
            <person name="Bono H."/>
            <person name="Chalk A.M."/>
            <person name="Chiu K.P."/>
            <person name="Choudhary V."/>
            <person name="Christoffels A."/>
            <person name="Clutterbuck D.R."/>
            <person name="Crowe M.L."/>
            <person name="Dalla E."/>
            <person name="Dalrymple B.P."/>
            <person name="de Bono B."/>
            <person name="Della Gatta G."/>
            <person name="di Bernardo D."/>
            <person name="Down T."/>
            <person name="Engstrom P."/>
            <person name="Fagiolini M."/>
            <person name="Faulkner G."/>
            <person name="Fletcher C.F."/>
            <person name="Fukushima T."/>
            <person name="Furuno M."/>
            <person name="Futaki S."/>
            <person name="Gariboldi M."/>
            <person name="Georgii-Hemming P."/>
            <person name="Gingeras T.R."/>
            <person name="Gojobori T."/>
            <person name="Green R.E."/>
            <person name="Gustincich S."/>
            <person name="Harbers M."/>
            <person name="Hayashi Y."/>
            <person name="Hensch T.K."/>
            <person name="Hirokawa N."/>
            <person name="Hill D."/>
            <person name="Huminiecki L."/>
            <person name="Iacono M."/>
            <person name="Ikeo K."/>
            <person name="Iwama A."/>
            <person name="Ishikawa T."/>
            <person name="Jakt M."/>
            <person name="Kanapin A."/>
            <person name="Katoh M."/>
            <person name="Kawasawa Y."/>
            <person name="Kelso J."/>
            <person name="Kitamura H."/>
            <person name="Kitano H."/>
            <person name="Kollias G."/>
            <person name="Krishnan S.P."/>
            <person name="Kruger A."/>
            <person name="Kummerfeld S.K."/>
            <person name="Kurochkin I.V."/>
            <person name="Lareau L.F."/>
            <person name="Lazarevic D."/>
            <person name="Lipovich L."/>
            <person name="Liu J."/>
            <person name="Liuni S."/>
            <person name="McWilliam S."/>
            <person name="Madan Babu M."/>
            <person name="Madera M."/>
            <person name="Marchionni L."/>
            <person name="Matsuda H."/>
            <person name="Matsuzawa S."/>
            <person name="Miki H."/>
            <person name="Mignone F."/>
            <person name="Miyake S."/>
            <person name="Morris K."/>
            <person name="Mottagui-Tabar S."/>
            <person name="Mulder N."/>
            <person name="Nakano N."/>
            <person name="Nakauchi H."/>
            <person name="Ng P."/>
            <person name="Nilsson R."/>
            <person name="Nishiguchi S."/>
            <person name="Nishikawa S."/>
            <person name="Nori F."/>
            <person name="Ohara O."/>
            <person name="Okazaki Y."/>
            <person name="Orlando V."/>
            <person name="Pang K.C."/>
            <person name="Pavan W.J."/>
            <person name="Pavesi G."/>
            <person name="Pesole G."/>
            <person name="Petrovsky N."/>
            <person name="Piazza S."/>
            <person name="Reed J."/>
            <person name="Reid J.F."/>
            <person name="Ring B.Z."/>
            <person name="Ringwald M."/>
            <person name="Rost B."/>
            <person name="Ruan Y."/>
            <person name="Salzberg S.L."/>
            <person name="Sandelin A."/>
            <person name="Schneider C."/>
            <person name="Schoenbach C."/>
            <person name="Sekiguchi K."/>
            <person name="Semple C.A."/>
            <person name="Seno S."/>
            <person name="Sessa L."/>
            <person name="Sheng Y."/>
            <person name="Shibata Y."/>
            <person name="Shimada H."/>
            <person name="Shimada K."/>
            <person name="Silva D."/>
            <person name="Sinclair B."/>
            <person name="Sperling S."/>
            <person name="Stupka E."/>
            <person name="Sugiura K."/>
            <person name="Sultana R."/>
            <person name="Takenaka Y."/>
            <person name="Taki K."/>
            <person name="Tammoja K."/>
            <person name="Tan S.L."/>
            <person name="Tang S."/>
            <person name="Taylor M.S."/>
            <person name="Tegner J."/>
            <person name="Teichmann S.A."/>
            <person name="Ueda H.R."/>
            <person name="van Nimwegen E."/>
            <person name="Verardo R."/>
            <person name="Wei C.L."/>
            <person name="Yagi K."/>
            <person name="Yamanishi H."/>
            <person name="Zabarovsky E."/>
            <person name="Zhu S."/>
            <person name="Zimmer A."/>
            <person name="Hide W."/>
            <person name="Bult C."/>
            <person name="Grimmond S.M."/>
            <person name="Teasdale R.D."/>
            <person name="Liu E.T."/>
            <person name="Brusic V."/>
            <person name="Quackenbush J."/>
            <person name="Wahlestedt C."/>
            <person name="Mattick J.S."/>
            <person name="Hume D.A."/>
            <person name="Kai C."/>
            <person name="Sasaki D."/>
            <person name="Tomaru Y."/>
            <person name="Fukuda S."/>
            <person name="Kanamori-Katayama M."/>
            <person name="Suzuki M."/>
            <person name="Aoki J."/>
            <person name="Arakawa T."/>
            <person name="Iida J."/>
            <person name="Imamura K."/>
            <person name="Itoh M."/>
            <person name="Kato T."/>
            <person name="Kawaji H."/>
            <person name="Kawagashira N."/>
            <person name="Kawashima T."/>
            <person name="Kojima M."/>
            <person name="Kondo S."/>
            <person name="Konno H."/>
            <person name="Nakano K."/>
            <person name="Ninomiya N."/>
            <person name="Nishio T."/>
            <person name="Okada M."/>
            <person name="Plessy C."/>
            <person name="Shibata K."/>
            <person name="Shiraki T."/>
            <person name="Suzuki S."/>
            <person name="Tagami M."/>
            <person name="Waki K."/>
            <person name="Watahiki A."/>
            <person name="Okamura-Oho Y."/>
            <person name="Suzuki H."/>
            <person name="Kawai J."/>
            <person name="Hayashizaki Y."/>
        </authorList>
    </citation>
    <scope>NUCLEOTIDE SEQUENCE [LARGE SCALE MRNA]</scope>
    <source>
        <strain>C57BL/6J</strain>
        <tissue>Cerebellum</tissue>
        <tissue>Embryo</tissue>
    </source>
</reference>
<reference key="2">
    <citation type="journal article" date="2004" name="Genome Res.">
        <title>The status, quality, and expansion of the NIH full-length cDNA project: the Mammalian Gene Collection (MGC).</title>
        <authorList>
            <consortium name="The MGC Project Team"/>
        </authorList>
    </citation>
    <scope>NUCLEOTIDE SEQUENCE [LARGE SCALE MRNA]</scope>
    <source>
        <strain>FVB/N</strain>
        <tissue>Colon</tissue>
    </source>
</reference>
<reference key="3">
    <citation type="journal article" date="2010" name="Cell">
        <title>A tissue-specific atlas of mouse protein phosphorylation and expression.</title>
        <authorList>
            <person name="Huttlin E.L."/>
            <person name="Jedrychowski M.P."/>
            <person name="Elias J.E."/>
            <person name="Goswami T."/>
            <person name="Rad R."/>
            <person name="Beausoleil S.A."/>
            <person name="Villen J."/>
            <person name="Haas W."/>
            <person name="Sowa M.E."/>
            <person name="Gygi S.P."/>
        </authorList>
    </citation>
    <scope>PHOSPHORYLATION [LARGE SCALE ANALYSIS] AT SER-157 AND SER-159</scope>
    <scope>IDENTIFICATION BY MASS SPECTROMETRY [LARGE SCALE ANALYSIS]</scope>
    <source>
        <tissue>Brown adipose tissue</tissue>
        <tissue>Liver</tissue>
        <tissue>Pancreas</tissue>
        <tissue>Spleen</tissue>
        <tissue>Testis</tissue>
    </source>
</reference>
<protein>
    <recommendedName>
        <fullName>Ribonuclease P/MRP protein subunit POP5</fullName>
    </recommendedName>
</protein>
<comment type="function">
    <text evidence="1">Component of ribonuclease P, a protein complex that generates mature tRNA molecules by cleaving their 5'-ends. Also a component of the MRP ribonuclease complex, which cleaves pre-rRNA sequences.</text>
</comment>
<comment type="subunit">
    <text evidence="1">Component of nuclear RNase P and RNase MRP ribonucleoproteins. RNase P consists of a catalytic RNA moiety and 10 different protein chains; POP1, POP4, POP5, POP7, RPP14, RPP21, RPP25, RPP30, RPP38 and RPP40. Within the RNase P complex, POP1, POP7 and RPP25 form the 'finger' subcomplex, POP5, RPP14, RPP40 and homodimeric RPP30 form the 'palm' subcomplex, and RPP21, POP4 and RPP38 form the 'wrist' subcomplex. All subunits of the RNase P complex interact with the catalytic RNA. Several subunits of RNase P are also part of the RNase MRP complex. RNase MRP consists of a catalytic RNA moiety and about 8 protein subunits; POP1, POP7, RPP25, RPP30, RPP38, RPP40 and possibly also POP4 and POP5.</text>
</comment>
<comment type="subcellular location">
    <subcellularLocation>
        <location evidence="1">Nucleus</location>
        <location evidence="1">Nucleolus</location>
    </subcellularLocation>
</comment>
<comment type="similarity">
    <text evidence="2">Belongs to the eukaryotic/archaeal RNase P protein component 2 family.</text>
</comment>
<comment type="sequence caution" evidence="2">
    <conflict type="frameshift">
        <sequence resource="EMBL-CDS" id="BAB28294"/>
    </conflict>
</comment>
<keyword id="KW-0539">Nucleus</keyword>
<keyword id="KW-0597">Phosphoprotein</keyword>
<keyword id="KW-1185">Reference proteome</keyword>
<keyword id="KW-0698">rRNA processing</keyword>
<keyword id="KW-0819">tRNA processing</keyword>
<gene>
    <name type="primary">Pop5</name>
</gene>
<dbReference type="EMBL" id="AK005290">
    <property type="protein sequence ID" value="BAB23935.1"/>
    <property type="molecule type" value="mRNA"/>
</dbReference>
<dbReference type="EMBL" id="AK012523">
    <property type="protein sequence ID" value="BAB28294.1"/>
    <property type="status" value="ALT_FRAME"/>
    <property type="molecule type" value="mRNA"/>
</dbReference>
<dbReference type="EMBL" id="AK013257">
    <property type="protein sequence ID" value="BAB28751.1"/>
    <property type="molecule type" value="mRNA"/>
</dbReference>
<dbReference type="EMBL" id="BC022670">
    <property type="protein sequence ID" value="AAH22670.1"/>
    <property type="molecule type" value="mRNA"/>
</dbReference>
<dbReference type="CCDS" id="CCDS19583.1"/>
<dbReference type="RefSeq" id="NP_080674.1">
    <property type="nucleotide sequence ID" value="NM_026398.5"/>
</dbReference>
<dbReference type="RefSeq" id="XP_030109934.1">
    <property type="nucleotide sequence ID" value="XM_030254074.2"/>
</dbReference>
<dbReference type="RefSeq" id="XP_036020636.1">
    <property type="nucleotide sequence ID" value="XM_036164743.1"/>
</dbReference>
<dbReference type="SMR" id="Q9DB28"/>
<dbReference type="FunCoup" id="Q9DB28">
    <property type="interactions" value="799"/>
</dbReference>
<dbReference type="IntAct" id="Q9DB28">
    <property type="interactions" value="1"/>
</dbReference>
<dbReference type="STRING" id="10090.ENSMUSP00000080215"/>
<dbReference type="iPTMnet" id="Q9DB28"/>
<dbReference type="PhosphoSitePlus" id="Q9DB28"/>
<dbReference type="PaxDb" id="10090-ENSMUSP00000080215"/>
<dbReference type="PeptideAtlas" id="Q9DB28"/>
<dbReference type="ProteomicsDB" id="291639"/>
<dbReference type="Pumba" id="Q9DB28"/>
<dbReference type="Antibodypedia" id="45552">
    <property type="antibodies" value="52 antibodies from 18 providers"/>
</dbReference>
<dbReference type="Ensembl" id="ENSMUST00000081497.13">
    <property type="protein sequence ID" value="ENSMUSP00000080215.7"/>
    <property type="gene ID" value="ENSMUSG00000060152.15"/>
</dbReference>
<dbReference type="Ensembl" id="ENSMUST00000135455.2">
    <property type="protein sequence ID" value="ENSMUSP00000118408.2"/>
    <property type="gene ID" value="ENSMUSG00000060152.15"/>
</dbReference>
<dbReference type="GeneID" id="117109"/>
<dbReference type="KEGG" id="mmu:117109"/>
<dbReference type="UCSC" id="uc008zdi.1">
    <property type="organism name" value="mouse"/>
</dbReference>
<dbReference type="AGR" id="MGI:2151221"/>
<dbReference type="CTD" id="51367"/>
<dbReference type="MGI" id="MGI:2151221">
    <property type="gene designation" value="Pop5"/>
</dbReference>
<dbReference type="VEuPathDB" id="HostDB:ENSMUSG00000060152"/>
<dbReference type="eggNOG" id="KOG4639">
    <property type="taxonomic scope" value="Eukaryota"/>
</dbReference>
<dbReference type="GeneTree" id="ENSGT00390000012331"/>
<dbReference type="HOGENOM" id="CLU_086710_2_0_1"/>
<dbReference type="InParanoid" id="Q9DB28"/>
<dbReference type="OMA" id="MQNYLDK"/>
<dbReference type="OrthoDB" id="24745at2759"/>
<dbReference type="PhylomeDB" id="Q9DB28"/>
<dbReference type="TreeFam" id="TF317496"/>
<dbReference type="BioGRID-ORCS" id="117109">
    <property type="hits" value="25 hits in 112 CRISPR screens"/>
</dbReference>
<dbReference type="ChiTaRS" id="Pop5">
    <property type="organism name" value="mouse"/>
</dbReference>
<dbReference type="PRO" id="PR:Q9DB28"/>
<dbReference type="Proteomes" id="UP000000589">
    <property type="component" value="Chromosome 5"/>
</dbReference>
<dbReference type="RNAct" id="Q9DB28">
    <property type="molecule type" value="protein"/>
</dbReference>
<dbReference type="Bgee" id="ENSMUSG00000060152">
    <property type="expression patterns" value="Expressed in dentate gyrus of hippocampal formation granule cell and 273 other cell types or tissues"/>
</dbReference>
<dbReference type="GO" id="GO:0005655">
    <property type="term" value="C:nucleolar ribonuclease P complex"/>
    <property type="evidence" value="ECO:0000314"/>
    <property type="project" value="MGI"/>
</dbReference>
<dbReference type="GO" id="GO:0000172">
    <property type="term" value="C:ribonuclease MRP complex"/>
    <property type="evidence" value="ECO:0000247"/>
    <property type="project" value="MGI"/>
</dbReference>
<dbReference type="GO" id="GO:0000171">
    <property type="term" value="F:ribonuclease MRP activity"/>
    <property type="evidence" value="ECO:0000247"/>
    <property type="project" value="MGI"/>
</dbReference>
<dbReference type="GO" id="GO:0004526">
    <property type="term" value="F:ribonuclease P activity"/>
    <property type="evidence" value="ECO:0000314"/>
    <property type="project" value="MGI"/>
</dbReference>
<dbReference type="GO" id="GO:0033204">
    <property type="term" value="F:ribonuclease P RNA binding"/>
    <property type="evidence" value="ECO:0000250"/>
    <property type="project" value="UniProtKB"/>
</dbReference>
<dbReference type="GO" id="GO:0006364">
    <property type="term" value="P:rRNA processing"/>
    <property type="evidence" value="ECO:0000247"/>
    <property type="project" value="MGI"/>
</dbReference>
<dbReference type="GO" id="GO:0001682">
    <property type="term" value="P:tRNA 5'-leader removal"/>
    <property type="evidence" value="ECO:0000250"/>
    <property type="project" value="UniProtKB"/>
</dbReference>
<dbReference type="GO" id="GO:0008033">
    <property type="term" value="P:tRNA processing"/>
    <property type="evidence" value="ECO:0000314"/>
    <property type="project" value="MGI"/>
</dbReference>
<dbReference type="FunFam" id="3.30.70.3250:FF:000001">
    <property type="entry name" value="Ribonuclease P/MRP protein subunit POP5"/>
    <property type="match status" value="1"/>
</dbReference>
<dbReference type="Gene3D" id="3.30.70.3250">
    <property type="entry name" value="Ribonuclease P, Pop5 subunit"/>
    <property type="match status" value="1"/>
</dbReference>
<dbReference type="InterPro" id="IPR002759">
    <property type="entry name" value="Pop5/Rpp14/Rnp2-like"/>
</dbReference>
<dbReference type="InterPro" id="IPR016819">
    <property type="entry name" value="RNase_P/MRP_POP5"/>
</dbReference>
<dbReference type="InterPro" id="IPR038085">
    <property type="entry name" value="Rnp2-like_sf"/>
</dbReference>
<dbReference type="PANTHER" id="PTHR48414">
    <property type="entry name" value="POP5 HOMOLOG, RIBONUCLEASE P_MRP SUBUNIT"/>
    <property type="match status" value="1"/>
</dbReference>
<dbReference type="PANTHER" id="PTHR48414:SF1">
    <property type="entry name" value="POP5 HOMOLOG, RIBONUCLEASE P_MRP SUBUNIT"/>
    <property type="match status" value="1"/>
</dbReference>
<dbReference type="Pfam" id="PF01900">
    <property type="entry name" value="RNase_P_Rpp14"/>
    <property type="match status" value="1"/>
</dbReference>
<dbReference type="PIRSF" id="PIRSF023803">
    <property type="entry name" value="Ribonuclease_P_prd"/>
    <property type="match status" value="1"/>
</dbReference>
<dbReference type="SUPFAM" id="SSF160350">
    <property type="entry name" value="Rnp2-like"/>
    <property type="match status" value="1"/>
</dbReference>
<accession>Q9DB28</accession>
<accession>Q9CSC3</accession>
<accession>Q9CSL4</accession>
<organism>
    <name type="scientific">Mus musculus</name>
    <name type="common">Mouse</name>
    <dbReference type="NCBI Taxonomy" id="10090"/>
    <lineage>
        <taxon>Eukaryota</taxon>
        <taxon>Metazoa</taxon>
        <taxon>Chordata</taxon>
        <taxon>Craniata</taxon>
        <taxon>Vertebrata</taxon>
        <taxon>Euteleostomi</taxon>
        <taxon>Mammalia</taxon>
        <taxon>Eutheria</taxon>
        <taxon>Euarchontoglires</taxon>
        <taxon>Glires</taxon>
        <taxon>Rodentia</taxon>
        <taxon>Myomorpha</taxon>
        <taxon>Muroidea</taxon>
        <taxon>Muridae</taxon>
        <taxon>Murinae</taxon>
        <taxon>Mus</taxon>
        <taxon>Mus</taxon>
    </lineage>
</organism>
<name>POP5_MOUSE</name>
<feature type="chain" id="PRO_0000239008" description="Ribonuclease P/MRP protein subunit POP5">
    <location>
        <begin position="1"/>
        <end position="169"/>
    </location>
</feature>
<feature type="modified residue" description="Phosphoserine" evidence="3">
    <location>
        <position position="157"/>
    </location>
</feature>
<feature type="modified residue" description="Phosphoserine" evidence="3">
    <location>
        <position position="159"/>
    </location>
</feature>
<feature type="sequence conflict" description="In Ref. 1; BAB28751." evidence="2" ref="1">
    <original>V</original>
    <variation>R</variation>
    <location>
        <position position="2"/>
    </location>
</feature>
<evidence type="ECO:0000250" key="1">
    <source>
        <dbReference type="UniProtKB" id="Q969H6"/>
    </source>
</evidence>
<evidence type="ECO:0000305" key="2"/>
<evidence type="ECO:0007744" key="3">
    <source>
    </source>
</evidence>
<sequence length="169" mass="19285">MVRFKHRYLLCELVSEDARCRLSLDDRVLGGLVRDTIARVHGAFGAAACSVGFAVRYLNAYTGVVLLRCRKDFYQLVWSALPFITYLENKGHRYPCFFNTLHVGGTIRTCQKFLIQYNRRQLLILLQNCTDEGEREAIKKSVSRSCLLDREPVEELSDSAGEEVAEAME</sequence>